<feature type="chain" id="PRO_1000129358" description="Ribonuclease PH">
    <location>
        <begin position="1"/>
        <end position="238"/>
    </location>
</feature>
<feature type="binding site" evidence="1">
    <location>
        <position position="86"/>
    </location>
    <ligand>
        <name>phosphate</name>
        <dbReference type="ChEBI" id="CHEBI:43474"/>
        <note>substrate</note>
    </ligand>
</feature>
<feature type="binding site" evidence="1">
    <location>
        <begin position="124"/>
        <end position="126"/>
    </location>
    <ligand>
        <name>phosphate</name>
        <dbReference type="ChEBI" id="CHEBI:43474"/>
        <note>substrate</note>
    </ligand>
</feature>
<accession>B4F0W3</accession>
<dbReference type="EC" id="2.7.7.56" evidence="1"/>
<dbReference type="EMBL" id="AM942759">
    <property type="protein sequence ID" value="CAR46192.1"/>
    <property type="molecule type" value="Genomic_DNA"/>
</dbReference>
<dbReference type="RefSeq" id="WP_004249760.1">
    <property type="nucleotide sequence ID" value="NC_010554.1"/>
</dbReference>
<dbReference type="SMR" id="B4F0W3"/>
<dbReference type="EnsemblBacteria" id="CAR46192">
    <property type="protein sequence ID" value="CAR46192"/>
    <property type="gene ID" value="PMI3151"/>
</dbReference>
<dbReference type="GeneID" id="6801800"/>
<dbReference type="KEGG" id="pmr:PMI3151"/>
<dbReference type="eggNOG" id="COG0689">
    <property type="taxonomic scope" value="Bacteria"/>
</dbReference>
<dbReference type="HOGENOM" id="CLU_050858_0_0_6"/>
<dbReference type="Proteomes" id="UP000008319">
    <property type="component" value="Chromosome"/>
</dbReference>
<dbReference type="GO" id="GO:0000175">
    <property type="term" value="F:3'-5'-RNA exonuclease activity"/>
    <property type="evidence" value="ECO:0007669"/>
    <property type="project" value="UniProtKB-UniRule"/>
</dbReference>
<dbReference type="GO" id="GO:0000049">
    <property type="term" value="F:tRNA binding"/>
    <property type="evidence" value="ECO:0007669"/>
    <property type="project" value="UniProtKB-UniRule"/>
</dbReference>
<dbReference type="GO" id="GO:0009022">
    <property type="term" value="F:tRNA nucleotidyltransferase activity"/>
    <property type="evidence" value="ECO:0007669"/>
    <property type="project" value="UniProtKB-UniRule"/>
</dbReference>
<dbReference type="GO" id="GO:0016075">
    <property type="term" value="P:rRNA catabolic process"/>
    <property type="evidence" value="ECO:0007669"/>
    <property type="project" value="UniProtKB-UniRule"/>
</dbReference>
<dbReference type="GO" id="GO:0006364">
    <property type="term" value="P:rRNA processing"/>
    <property type="evidence" value="ECO:0007669"/>
    <property type="project" value="UniProtKB-KW"/>
</dbReference>
<dbReference type="GO" id="GO:0008033">
    <property type="term" value="P:tRNA processing"/>
    <property type="evidence" value="ECO:0007669"/>
    <property type="project" value="UniProtKB-UniRule"/>
</dbReference>
<dbReference type="CDD" id="cd11362">
    <property type="entry name" value="RNase_PH_bact"/>
    <property type="match status" value="1"/>
</dbReference>
<dbReference type="FunFam" id="3.30.230.70:FF:000003">
    <property type="entry name" value="Ribonuclease PH"/>
    <property type="match status" value="1"/>
</dbReference>
<dbReference type="Gene3D" id="3.30.230.70">
    <property type="entry name" value="GHMP Kinase, N-terminal domain"/>
    <property type="match status" value="1"/>
</dbReference>
<dbReference type="HAMAP" id="MF_00564">
    <property type="entry name" value="RNase_PH"/>
    <property type="match status" value="1"/>
</dbReference>
<dbReference type="InterPro" id="IPR001247">
    <property type="entry name" value="ExoRNase_PH_dom1"/>
</dbReference>
<dbReference type="InterPro" id="IPR015847">
    <property type="entry name" value="ExoRNase_PH_dom2"/>
</dbReference>
<dbReference type="InterPro" id="IPR036345">
    <property type="entry name" value="ExoRNase_PH_dom2_sf"/>
</dbReference>
<dbReference type="InterPro" id="IPR027408">
    <property type="entry name" value="PNPase/RNase_PH_dom_sf"/>
</dbReference>
<dbReference type="InterPro" id="IPR020568">
    <property type="entry name" value="Ribosomal_Su5_D2-typ_SF"/>
</dbReference>
<dbReference type="InterPro" id="IPR050080">
    <property type="entry name" value="RNase_PH"/>
</dbReference>
<dbReference type="InterPro" id="IPR002381">
    <property type="entry name" value="RNase_PH_bac-type"/>
</dbReference>
<dbReference type="InterPro" id="IPR018336">
    <property type="entry name" value="RNase_PH_CS"/>
</dbReference>
<dbReference type="NCBIfam" id="TIGR01966">
    <property type="entry name" value="RNasePH"/>
    <property type="match status" value="1"/>
</dbReference>
<dbReference type="PANTHER" id="PTHR11953">
    <property type="entry name" value="EXOSOME COMPLEX COMPONENT"/>
    <property type="match status" value="1"/>
</dbReference>
<dbReference type="PANTHER" id="PTHR11953:SF0">
    <property type="entry name" value="EXOSOME COMPLEX COMPONENT RRP41"/>
    <property type="match status" value="1"/>
</dbReference>
<dbReference type="Pfam" id="PF01138">
    <property type="entry name" value="RNase_PH"/>
    <property type="match status" value="1"/>
</dbReference>
<dbReference type="Pfam" id="PF03725">
    <property type="entry name" value="RNase_PH_C"/>
    <property type="match status" value="1"/>
</dbReference>
<dbReference type="SUPFAM" id="SSF55666">
    <property type="entry name" value="Ribonuclease PH domain 2-like"/>
    <property type="match status" value="1"/>
</dbReference>
<dbReference type="SUPFAM" id="SSF54211">
    <property type="entry name" value="Ribosomal protein S5 domain 2-like"/>
    <property type="match status" value="1"/>
</dbReference>
<dbReference type="PROSITE" id="PS01277">
    <property type="entry name" value="RIBONUCLEASE_PH"/>
    <property type="match status" value="1"/>
</dbReference>
<comment type="function">
    <text evidence="1">Phosphorolytic 3'-5' exoribonuclease that plays an important role in tRNA 3'-end maturation. Removes nucleotide residues following the 3'-CCA terminus of tRNAs; can also add nucleotides to the ends of RNA molecules by using nucleoside diphosphates as substrates, but this may not be physiologically important. Probably plays a role in initiation of 16S rRNA degradation (leading to ribosome degradation) during starvation.</text>
</comment>
<comment type="catalytic activity">
    <reaction evidence="1">
        <text>tRNA(n+1) + phosphate = tRNA(n) + a ribonucleoside 5'-diphosphate</text>
        <dbReference type="Rhea" id="RHEA:10628"/>
        <dbReference type="Rhea" id="RHEA-COMP:17343"/>
        <dbReference type="Rhea" id="RHEA-COMP:17344"/>
        <dbReference type="ChEBI" id="CHEBI:43474"/>
        <dbReference type="ChEBI" id="CHEBI:57930"/>
        <dbReference type="ChEBI" id="CHEBI:173114"/>
        <dbReference type="EC" id="2.7.7.56"/>
    </reaction>
</comment>
<comment type="subunit">
    <text evidence="1">Homohexameric ring arranged as a trimer of dimers.</text>
</comment>
<comment type="similarity">
    <text evidence="1">Belongs to the RNase PH family.</text>
</comment>
<keyword id="KW-0548">Nucleotidyltransferase</keyword>
<keyword id="KW-1185">Reference proteome</keyword>
<keyword id="KW-0694">RNA-binding</keyword>
<keyword id="KW-0698">rRNA processing</keyword>
<keyword id="KW-0808">Transferase</keyword>
<keyword id="KW-0819">tRNA processing</keyword>
<keyword id="KW-0820">tRNA-binding</keyword>
<proteinExistence type="inferred from homology"/>
<sequence length="238" mass="25615">MRPADRQADQVRPITITRHYTKHAEGSVLVEFGDTKVLCNATVEEGVPRFLKGQGQGWVTAEYGMLPRATNSRNAREAARGKQTGRTMEIQRLIARSLRAAVDLKALGEFTITVDCDVIQADGGTRTASISGACVALVDALNKMVTEGKLKKSPLKSMVAAVSVGIVDGQPLCDLEYVEDSAAETDMNVVMIDDGRMIEVQGTAEGAPFSHEELLALLALAKGGLEKIFEAQKEALKQ</sequence>
<name>RNPH_PROMH</name>
<gene>
    <name evidence="1" type="primary">rph</name>
    <name type="ordered locus">PMI3151</name>
</gene>
<protein>
    <recommendedName>
        <fullName evidence="1">Ribonuclease PH</fullName>
        <shortName evidence="1">RNase PH</shortName>
        <ecNumber evidence="1">2.7.7.56</ecNumber>
    </recommendedName>
    <alternativeName>
        <fullName evidence="1">tRNA nucleotidyltransferase</fullName>
    </alternativeName>
</protein>
<organism>
    <name type="scientific">Proteus mirabilis (strain HI4320)</name>
    <dbReference type="NCBI Taxonomy" id="529507"/>
    <lineage>
        <taxon>Bacteria</taxon>
        <taxon>Pseudomonadati</taxon>
        <taxon>Pseudomonadota</taxon>
        <taxon>Gammaproteobacteria</taxon>
        <taxon>Enterobacterales</taxon>
        <taxon>Morganellaceae</taxon>
        <taxon>Proteus</taxon>
    </lineage>
</organism>
<reference key="1">
    <citation type="journal article" date="2008" name="J. Bacteriol.">
        <title>Complete genome sequence of uropathogenic Proteus mirabilis, a master of both adherence and motility.</title>
        <authorList>
            <person name="Pearson M.M."/>
            <person name="Sebaihia M."/>
            <person name="Churcher C."/>
            <person name="Quail M.A."/>
            <person name="Seshasayee A.S."/>
            <person name="Luscombe N.M."/>
            <person name="Abdellah Z."/>
            <person name="Arrosmith C."/>
            <person name="Atkin B."/>
            <person name="Chillingworth T."/>
            <person name="Hauser H."/>
            <person name="Jagels K."/>
            <person name="Moule S."/>
            <person name="Mungall K."/>
            <person name="Norbertczak H."/>
            <person name="Rabbinowitsch E."/>
            <person name="Walker D."/>
            <person name="Whithead S."/>
            <person name="Thomson N.R."/>
            <person name="Rather P.N."/>
            <person name="Parkhill J."/>
            <person name="Mobley H.L.T."/>
        </authorList>
    </citation>
    <scope>NUCLEOTIDE SEQUENCE [LARGE SCALE GENOMIC DNA]</scope>
    <source>
        <strain>HI4320</strain>
    </source>
</reference>
<evidence type="ECO:0000255" key="1">
    <source>
        <dbReference type="HAMAP-Rule" id="MF_00564"/>
    </source>
</evidence>